<keyword id="KW-0131">Cell cycle</keyword>
<keyword id="KW-0132">Cell division</keyword>
<keyword id="KW-0342">GTP-binding</keyword>
<keyword id="KW-0460">Magnesium</keyword>
<keyword id="KW-0479">Metal-binding</keyword>
<keyword id="KW-0547">Nucleotide-binding</keyword>
<keyword id="KW-1185">Reference proteome</keyword>
<keyword id="KW-0717">Septation</keyword>
<protein>
    <recommendedName>
        <fullName evidence="1">Probable GTP-binding protein EngB</fullName>
    </recommendedName>
</protein>
<name>ENGB_RHORT</name>
<feature type="chain" id="PRO_0000266934" description="Probable GTP-binding protein EngB">
    <location>
        <begin position="1"/>
        <end position="231"/>
    </location>
</feature>
<feature type="domain" description="EngB-type G" evidence="1">
    <location>
        <begin position="51"/>
        <end position="231"/>
    </location>
</feature>
<feature type="binding site" evidence="1">
    <location>
        <begin position="59"/>
        <end position="66"/>
    </location>
    <ligand>
        <name>GTP</name>
        <dbReference type="ChEBI" id="CHEBI:37565"/>
    </ligand>
</feature>
<feature type="binding site" evidence="1">
    <location>
        <position position="66"/>
    </location>
    <ligand>
        <name>Mg(2+)</name>
        <dbReference type="ChEBI" id="CHEBI:18420"/>
    </ligand>
</feature>
<feature type="binding site" evidence="1">
    <location>
        <begin position="86"/>
        <end position="90"/>
    </location>
    <ligand>
        <name>GTP</name>
        <dbReference type="ChEBI" id="CHEBI:37565"/>
    </ligand>
</feature>
<feature type="binding site" evidence="1">
    <location>
        <position position="88"/>
    </location>
    <ligand>
        <name>Mg(2+)</name>
        <dbReference type="ChEBI" id="CHEBI:18420"/>
    </ligand>
</feature>
<feature type="binding site" evidence="1">
    <location>
        <begin position="109"/>
        <end position="112"/>
    </location>
    <ligand>
        <name>GTP</name>
        <dbReference type="ChEBI" id="CHEBI:37565"/>
    </ligand>
</feature>
<feature type="binding site" evidence="1">
    <location>
        <begin position="176"/>
        <end position="179"/>
    </location>
    <ligand>
        <name>GTP</name>
        <dbReference type="ChEBI" id="CHEBI:37565"/>
    </ligand>
</feature>
<feature type="binding site" evidence="1">
    <location>
        <begin position="210"/>
        <end position="212"/>
    </location>
    <ligand>
        <name>GTP</name>
        <dbReference type="ChEBI" id="CHEBI:37565"/>
    </ligand>
</feature>
<proteinExistence type="inferred from homology"/>
<comment type="function">
    <text evidence="1">Necessary for normal cell division and for the maintenance of normal septation.</text>
</comment>
<comment type="cofactor">
    <cofactor evidence="1">
        <name>Mg(2+)</name>
        <dbReference type="ChEBI" id="CHEBI:18420"/>
    </cofactor>
</comment>
<comment type="similarity">
    <text evidence="1">Belongs to the TRAFAC class TrmE-Era-EngA-EngB-Septin-like GTPase superfamily. EngB GTPase family.</text>
</comment>
<reference key="1">
    <citation type="journal article" date="2011" name="Stand. Genomic Sci.">
        <title>Complete genome sequence of Rhodospirillum rubrum type strain (S1).</title>
        <authorList>
            <person name="Munk A.C."/>
            <person name="Copeland A."/>
            <person name="Lucas S."/>
            <person name="Lapidus A."/>
            <person name="Del Rio T.G."/>
            <person name="Barry K."/>
            <person name="Detter J.C."/>
            <person name="Hammon N."/>
            <person name="Israni S."/>
            <person name="Pitluck S."/>
            <person name="Brettin T."/>
            <person name="Bruce D."/>
            <person name="Han C."/>
            <person name="Tapia R."/>
            <person name="Gilna P."/>
            <person name="Schmutz J."/>
            <person name="Larimer F."/>
            <person name="Land M."/>
            <person name="Kyrpides N.C."/>
            <person name="Mavromatis K."/>
            <person name="Richardson P."/>
            <person name="Rohde M."/>
            <person name="Goeker M."/>
            <person name="Klenk H.P."/>
            <person name="Zhang Y."/>
            <person name="Roberts G.P."/>
            <person name="Reslewic S."/>
            <person name="Schwartz D.C."/>
        </authorList>
    </citation>
    <scope>NUCLEOTIDE SEQUENCE [LARGE SCALE GENOMIC DNA]</scope>
    <source>
        <strain>ATCC 11170 / ATH 1.1.1 / DSM 467 / LMG 4362 / NCIMB 8255 / S1</strain>
    </source>
</reference>
<dbReference type="EMBL" id="CP000230">
    <property type="protein sequence ID" value="ABC24134.1"/>
    <property type="molecule type" value="Genomic_DNA"/>
</dbReference>
<dbReference type="RefSeq" id="YP_428421.1">
    <property type="nucleotide sequence ID" value="NC_007643.1"/>
</dbReference>
<dbReference type="SMR" id="Q2RP11"/>
<dbReference type="STRING" id="269796.Rru_A3340"/>
<dbReference type="EnsemblBacteria" id="ABC24134">
    <property type="protein sequence ID" value="ABC24134"/>
    <property type="gene ID" value="Rru_A3340"/>
</dbReference>
<dbReference type="KEGG" id="rru:Rru_A3340"/>
<dbReference type="PATRIC" id="fig|269796.9.peg.3454"/>
<dbReference type="eggNOG" id="COG0218">
    <property type="taxonomic scope" value="Bacteria"/>
</dbReference>
<dbReference type="HOGENOM" id="CLU_033732_2_0_5"/>
<dbReference type="PhylomeDB" id="Q2RP11"/>
<dbReference type="Proteomes" id="UP000001929">
    <property type="component" value="Chromosome"/>
</dbReference>
<dbReference type="GO" id="GO:0005829">
    <property type="term" value="C:cytosol"/>
    <property type="evidence" value="ECO:0007669"/>
    <property type="project" value="TreeGrafter"/>
</dbReference>
<dbReference type="GO" id="GO:0005525">
    <property type="term" value="F:GTP binding"/>
    <property type="evidence" value="ECO:0007669"/>
    <property type="project" value="UniProtKB-UniRule"/>
</dbReference>
<dbReference type="GO" id="GO:0046872">
    <property type="term" value="F:metal ion binding"/>
    <property type="evidence" value="ECO:0007669"/>
    <property type="project" value="UniProtKB-KW"/>
</dbReference>
<dbReference type="GO" id="GO:0000917">
    <property type="term" value="P:division septum assembly"/>
    <property type="evidence" value="ECO:0007669"/>
    <property type="project" value="UniProtKB-KW"/>
</dbReference>
<dbReference type="CDD" id="cd01876">
    <property type="entry name" value="YihA_EngB"/>
    <property type="match status" value="1"/>
</dbReference>
<dbReference type="Gene3D" id="3.40.50.300">
    <property type="entry name" value="P-loop containing nucleotide triphosphate hydrolases"/>
    <property type="match status" value="1"/>
</dbReference>
<dbReference type="HAMAP" id="MF_00321">
    <property type="entry name" value="GTPase_EngB"/>
    <property type="match status" value="1"/>
</dbReference>
<dbReference type="InterPro" id="IPR030393">
    <property type="entry name" value="G_ENGB_dom"/>
</dbReference>
<dbReference type="InterPro" id="IPR006073">
    <property type="entry name" value="GTP-bd"/>
</dbReference>
<dbReference type="InterPro" id="IPR019987">
    <property type="entry name" value="GTP-bd_ribosome_bio_YsxC"/>
</dbReference>
<dbReference type="InterPro" id="IPR027417">
    <property type="entry name" value="P-loop_NTPase"/>
</dbReference>
<dbReference type="NCBIfam" id="TIGR03598">
    <property type="entry name" value="GTPase_YsxC"/>
    <property type="match status" value="1"/>
</dbReference>
<dbReference type="PANTHER" id="PTHR11649:SF13">
    <property type="entry name" value="ENGB-TYPE G DOMAIN-CONTAINING PROTEIN"/>
    <property type="match status" value="1"/>
</dbReference>
<dbReference type="PANTHER" id="PTHR11649">
    <property type="entry name" value="MSS1/TRME-RELATED GTP-BINDING PROTEIN"/>
    <property type="match status" value="1"/>
</dbReference>
<dbReference type="Pfam" id="PF01926">
    <property type="entry name" value="MMR_HSR1"/>
    <property type="match status" value="1"/>
</dbReference>
<dbReference type="SUPFAM" id="SSF52540">
    <property type="entry name" value="P-loop containing nucleoside triphosphate hydrolases"/>
    <property type="match status" value="1"/>
</dbReference>
<dbReference type="PROSITE" id="PS51706">
    <property type="entry name" value="G_ENGB"/>
    <property type="match status" value="1"/>
</dbReference>
<gene>
    <name evidence="1" type="primary">engB</name>
    <name type="ordered locus">Rru_A3340</name>
</gene>
<sequence length="231" mass="25012">MADLPETPAFGAAFSDEEEAARALEAGRWLFSQTCSFVMGCVSLDTLPDHDLSEIAFAGRSNVGKSSLVNALTGRKTLARTSNTPGRTQELNYFRLGPEAQDPALMMVDLPGYGFAEAPKDAVKRWTRLIMAYLRGRPALRRVCLLIDSRHGIKENDRDVMRMLDEAAVSYQIVLTKADKLKAAEITDVLARVVAETAKHVAAHPDVIVTSSQSGAGIDLLRAQLAALASP</sequence>
<organism>
    <name type="scientific">Rhodospirillum rubrum (strain ATCC 11170 / ATH 1.1.1 / DSM 467 / LMG 4362 / NCIMB 8255 / S1)</name>
    <dbReference type="NCBI Taxonomy" id="269796"/>
    <lineage>
        <taxon>Bacteria</taxon>
        <taxon>Pseudomonadati</taxon>
        <taxon>Pseudomonadota</taxon>
        <taxon>Alphaproteobacteria</taxon>
        <taxon>Rhodospirillales</taxon>
        <taxon>Rhodospirillaceae</taxon>
        <taxon>Rhodospirillum</taxon>
    </lineage>
</organism>
<accession>Q2RP11</accession>
<evidence type="ECO:0000255" key="1">
    <source>
        <dbReference type="HAMAP-Rule" id="MF_00321"/>
    </source>
</evidence>